<dbReference type="EC" id="5.3.2.-"/>
<dbReference type="EMBL" id="AE009949">
    <property type="protein sequence ID" value="AAL97721.1"/>
    <property type="molecule type" value="Genomic_DNA"/>
</dbReference>
<dbReference type="RefSeq" id="WP_002984671.1">
    <property type="nucleotide sequence ID" value="NC_003485.1"/>
</dbReference>
<dbReference type="SMR" id="P67534"/>
<dbReference type="KEGG" id="spm:spyM18_1099"/>
<dbReference type="HOGENOM" id="CLU_148073_5_1_9"/>
<dbReference type="GO" id="GO:0016853">
    <property type="term" value="F:isomerase activity"/>
    <property type="evidence" value="ECO:0007669"/>
    <property type="project" value="UniProtKB-KW"/>
</dbReference>
<dbReference type="Gene3D" id="3.30.429.10">
    <property type="entry name" value="Macrophage Migration Inhibitory Factor"/>
    <property type="match status" value="1"/>
</dbReference>
<dbReference type="InterPro" id="IPR004370">
    <property type="entry name" value="4-OT-like_dom"/>
</dbReference>
<dbReference type="InterPro" id="IPR014347">
    <property type="entry name" value="Tautomerase/MIF_sf"/>
</dbReference>
<dbReference type="NCBIfam" id="NF002571">
    <property type="entry name" value="PRK02220.1"/>
    <property type="match status" value="1"/>
</dbReference>
<dbReference type="NCBIfam" id="NF002622">
    <property type="entry name" value="PRK02289.1"/>
    <property type="match status" value="1"/>
</dbReference>
<dbReference type="PANTHER" id="PTHR35530:SF1">
    <property type="entry name" value="2-HYDROXYMUCONATE TAUTOMERASE"/>
    <property type="match status" value="1"/>
</dbReference>
<dbReference type="PANTHER" id="PTHR35530">
    <property type="entry name" value="TAUTOMERASE-RELATED"/>
    <property type="match status" value="1"/>
</dbReference>
<dbReference type="Pfam" id="PF01361">
    <property type="entry name" value="Tautomerase"/>
    <property type="match status" value="1"/>
</dbReference>
<dbReference type="SUPFAM" id="SSF55331">
    <property type="entry name" value="Tautomerase/MIF"/>
    <property type="match status" value="1"/>
</dbReference>
<name>Y1099_STRP8</name>
<organism>
    <name type="scientific">Streptococcus pyogenes serotype M18 (strain MGAS8232)</name>
    <dbReference type="NCBI Taxonomy" id="186103"/>
    <lineage>
        <taxon>Bacteria</taxon>
        <taxon>Bacillati</taxon>
        <taxon>Bacillota</taxon>
        <taxon>Bacilli</taxon>
        <taxon>Lactobacillales</taxon>
        <taxon>Streptococcaceae</taxon>
        <taxon>Streptococcus</taxon>
    </lineage>
</organism>
<protein>
    <recommendedName>
        <fullName>Probable tautomerase spyM18_1099</fullName>
        <ecNumber>5.3.2.-</ecNumber>
    </recommendedName>
</protein>
<accession>P67534</accession>
<accession>Q99ZP7</accession>
<proteinExistence type="inferred from homology"/>
<gene>
    <name type="ordered locus">spyM18_1099</name>
</gene>
<reference key="1">
    <citation type="journal article" date="2002" name="Proc. Natl. Acad. Sci. U.S.A.">
        <title>Genome sequence and comparative microarray analysis of serotype M18 group A Streptococcus strains associated with acute rheumatic fever outbreaks.</title>
        <authorList>
            <person name="Smoot J.C."/>
            <person name="Barbian K.D."/>
            <person name="Van Gompel J.J."/>
            <person name="Smoot L.M."/>
            <person name="Chaussee M.S."/>
            <person name="Sylva G.L."/>
            <person name="Sturdevant D.E."/>
            <person name="Ricklefs S.M."/>
            <person name="Porcella S.F."/>
            <person name="Parkins L.D."/>
            <person name="Beres S.B."/>
            <person name="Campbell D.S."/>
            <person name="Smith T.M."/>
            <person name="Zhang Q."/>
            <person name="Kapur V."/>
            <person name="Daly J.A."/>
            <person name="Veasy L.G."/>
            <person name="Musser J.M."/>
        </authorList>
    </citation>
    <scope>NUCLEOTIDE SEQUENCE [LARGE SCALE GENOMIC DNA]</scope>
    <source>
        <strain>MGAS8232</strain>
    </source>
</reference>
<feature type="initiator methionine" description="Removed" evidence="1">
    <location>
        <position position="1"/>
    </location>
</feature>
<feature type="chain" id="PRO_0000209558" description="Probable tautomerase spyM18_1099">
    <location>
        <begin position="2"/>
        <end position="61"/>
    </location>
</feature>
<feature type="active site" description="Proton acceptor; via imino nitrogen" evidence="1">
    <location>
        <position position="2"/>
    </location>
</feature>
<keyword id="KW-0413">Isomerase</keyword>
<sequence length="61" mass="7055">MPFVTIDLFEGRSQEQKNQLAREVTEVVSRIAKAPKENIHVFINDMPEGTYYPQGEMKQKS</sequence>
<comment type="similarity">
    <text evidence="2">Belongs to the 4-oxalocrotonate tautomerase family.</text>
</comment>
<evidence type="ECO:0000250" key="1"/>
<evidence type="ECO:0000305" key="2"/>